<proteinExistence type="inferred from homology"/>
<evidence type="ECO:0000250" key="1"/>
<evidence type="ECO:0000256" key="2">
    <source>
        <dbReference type="SAM" id="MobiDB-lite"/>
    </source>
</evidence>
<evidence type="ECO:0000305" key="3"/>
<reference key="1">
    <citation type="journal article" date="2004" name="Nature">
        <title>Genome evolution in yeasts.</title>
        <authorList>
            <person name="Dujon B."/>
            <person name="Sherman D."/>
            <person name="Fischer G."/>
            <person name="Durrens P."/>
            <person name="Casaregola S."/>
            <person name="Lafontaine I."/>
            <person name="de Montigny J."/>
            <person name="Marck C."/>
            <person name="Neuveglise C."/>
            <person name="Talla E."/>
            <person name="Goffard N."/>
            <person name="Frangeul L."/>
            <person name="Aigle M."/>
            <person name="Anthouard V."/>
            <person name="Babour A."/>
            <person name="Barbe V."/>
            <person name="Barnay S."/>
            <person name="Blanchin S."/>
            <person name="Beckerich J.-M."/>
            <person name="Beyne E."/>
            <person name="Bleykasten C."/>
            <person name="Boisrame A."/>
            <person name="Boyer J."/>
            <person name="Cattolico L."/>
            <person name="Confanioleri F."/>
            <person name="de Daruvar A."/>
            <person name="Despons L."/>
            <person name="Fabre E."/>
            <person name="Fairhead C."/>
            <person name="Ferry-Dumazet H."/>
            <person name="Groppi A."/>
            <person name="Hantraye F."/>
            <person name="Hennequin C."/>
            <person name="Jauniaux N."/>
            <person name="Joyet P."/>
            <person name="Kachouri R."/>
            <person name="Kerrest A."/>
            <person name="Koszul R."/>
            <person name="Lemaire M."/>
            <person name="Lesur I."/>
            <person name="Ma L."/>
            <person name="Muller H."/>
            <person name="Nicaud J.-M."/>
            <person name="Nikolski M."/>
            <person name="Oztas S."/>
            <person name="Ozier-Kalogeropoulos O."/>
            <person name="Pellenz S."/>
            <person name="Potier S."/>
            <person name="Richard G.-F."/>
            <person name="Straub M.-L."/>
            <person name="Suleau A."/>
            <person name="Swennen D."/>
            <person name="Tekaia F."/>
            <person name="Wesolowski-Louvel M."/>
            <person name="Westhof E."/>
            <person name="Wirth B."/>
            <person name="Zeniou-Meyer M."/>
            <person name="Zivanovic Y."/>
            <person name="Bolotin-Fukuhara M."/>
            <person name="Thierry A."/>
            <person name="Bouchier C."/>
            <person name="Caudron B."/>
            <person name="Scarpelli C."/>
            <person name="Gaillardin C."/>
            <person name="Weissenbach J."/>
            <person name="Wincker P."/>
            <person name="Souciet J.-L."/>
        </authorList>
    </citation>
    <scope>NUCLEOTIDE SEQUENCE [LARGE SCALE GENOMIC DNA]</scope>
    <source>
        <strain>CLIB 122 / E 150</strain>
    </source>
</reference>
<dbReference type="EMBL" id="CR382132">
    <property type="protein sequence ID" value="CAG77965.1"/>
    <property type="molecule type" value="Genomic_DNA"/>
</dbReference>
<dbReference type="RefSeq" id="XP_505158.1">
    <property type="nucleotide sequence ID" value="XM_505158.1"/>
</dbReference>
<dbReference type="SMR" id="Q6C2F4"/>
<dbReference type="FunCoup" id="Q6C2F4">
    <property type="interactions" value="1181"/>
</dbReference>
<dbReference type="STRING" id="284591.Q6C2F4"/>
<dbReference type="EnsemblFungi" id="CAG77965">
    <property type="protein sequence ID" value="CAG77965"/>
    <property type="gene ID" value="YALI0_F08371g"/>
</dbReference>
<dbReference type="KEGG" id="yli:2908498"/>
<dbReference type="VEuPathDB" id="FungiDB:YALI0_F08371g"/>
<dbReference type="HOGENOM" id="CLU_008874_0_0_1"/>
<dbReference type="InParanoid" id="Q6C2F4"/>
<dbReference type="OMA" id="KSCWPSL"/>
<dbReference type="OrthoDB" id="122435at4891"/>
<dbReference type="Proteomes" id="UP000001300">
    <property type="component" value="Chromosome F"/>
</dbReference>
<dbReference type="GO" id="GO:0030692">
    <property type="term" value="C:Noc4p-Nop14p complex"/>
    <property type="evidence" value="ECO:0000318"/>
    <property type="project" value="GO_Central"/>
</dbReference>
<dbReference type="GO" id="GO:0005730">
    <property type="term" value="C:nucleolus"/>
    <property type="evidence" value="ECO:0000250"/>
    <property type="project" value="UniProtKB"/>
</dbReference>
<dbReference type="GO" id="GO:0032040">
    <property type="term" value="C:small-subunit processome"/>
    <property type="evidence" value="ECO:0000318"/>
    <property type="project" value="GO_Central"/>
</dbReference>
<dbReference type="GO" id="GO:0030515">
    <property type="term" value="F:snoRNA binding"/>
    <property type="evidence" value="ECO:0000250"/>
    <property type="project" value="UniProtKB"/>
</dbReference>
<dbReference type="GO" id="GO:0030490">
    <property type="term" value="P:maturation of SSU-rRNA"/>
    <property type="evidence" value="ECO:0000318"/>
    <property type="project" value="GO_Central"/>
</dbReference>
<dbReference type="GO" id="GO:0042274">
    <property type="term" value="P:ribosomal small subunit biogenesis"/>
    <property type="evidence" value="ECO:0000250"/>
    <property type="project" value="UniProtKB"/>
</dbReference>
<dbReference type="InterPro" id="IPR007276">
    <property type="entry name" value="Nop14"/>
</dbReference>
<dbReference type="PANTHER" id="PTHR23183">
    <property type="entry name" value="NOP14"/>
    <property type="match status" value="1"/>
</dbReference>
<dbReference type="PANTHER" id="PTHR23183:SF0">
    <property type="entry name" value="NUCLEOLAR PROTEIN 14"/>
    <property type="match status" value="1"/>
</dbReference>
<dbReference type="Pfam" id="PF04147">
    <property type="entry name" value="Nop14"/>
    <property type="match status" value="2"/>
</dbReference>
<name>NOP14_YARLI</name>
<accession>Q6C2F4</accession>
<protein>
    <recommendedName>
        <fullName>Probable nucleolar complex protein 14</fullName>
    </recommendedName>
</protein>
<comment type="function">
    <text evidence="1">Involved in nucleolar processing of pre-18S ribosomal RNA. Has a role in the nuclear export of 40S pre-ribosomal subunit to the cytoplasm (By similarity).</text>
</comment>
<comment type="subunit">
    <text evidence="1">Component of the ribosomal small subunit (SSU) processome.</text>
</comment>
<comment type="subcellular location">
    <subcellularLocation>
        <location evidence="1">Nucleus</location>
        <location evidence="1">Nucleolus</location>
    </subcellularLocation>
</comment>
<comment type="similarity">
    <text evidence="3">Belongs to the NOP14 family.</text>
</comment>
<sequence>MAKTSQLKRLKETLKKNDLTGQTNVKGNKKKMNSGKNRQDRDKVLSDIRQQFNPFDVKVARKKHDIGGRTVRGSVGRPGLSKLSGEEARMEARKLELQNKGRVGGVFDRRFGEGDSNMNPEEKMLERFTRERQLRSMGGGRNKSIFALDDDDDDADADMMLTHSGQALDFKDDFDQGDLGIEAEEDEEMAAILANRRKLAEERGMGAMGVNLEEMDGVDMEEAGTGRKKSKEEVMKEIIAKSKFHKAERQAARDKDQAIIEEMNDEDTMNALIRELGSIKAKKVVTALDQKEKEYDQNFRNMILDRRAKPQDRTKTDEELAKEEAEKLKKLEDERQARMRGEVAIDQGEGDDLDGNVAFDFENSEEEGEDDEDEAEDDDDEDVEIHEVDEDEDESGDKSGDESGEEETTKSEPASKSSSSTLAYTFPIPKSHKMFLETTSAYPLDQLPTIIDRINVLHHASLKEGNKERLAKFACVLIDHLMYLADEEEEDDFECLSEVVAKVHTLAETHSPTMAAHIRKKLEAHQADTTVTAGHLMLWTLIGMIFSTSDHFHLVVTPAVLVMTRFLSLSTFDSIPKCIAGLYTAQLLIQYQRIAKRFIPEIAVFLGRLIAALEGTETSLPMASLFKIAPIKGFTPGKASHKSTDKTISMRSANRSILSKKEVATLSQELHNQAVFSVSKLMDTYKDISAFPETFEFCENIPELADKYSRITKFKLADRKPLTLHKHRPLAIKTMAPKFEENFNVDKKSYNPDMALQETQKLRAELKKEKKSALREIRKDAAFEAREKIRERREKDDAYHEKMARLVRSVQTEEGAEKNAYERERASRKRKR</sequence>
<organism>
    <name type="scientific">Yarrowia lipolytica (strain CLIB 122 / E 150)</name>
    <name type="common">Yeast</name>
    <name type="synonym">Candida lipolytica</name>
    <dbReference type="NCBI Taxonomy" id="284591"/>
    <lineage>
        <taxon>Eukaryota</taxon>
        <taxon>Fungi</taxon>
        <taxon>Dikarya</taxon>
        <taxon>Ascomycota</taxon>
        <taxon>Saccharomycotina</taxon>
        <taxon>Dipodascomycetes</taxon>
        <taxon>Dipodascales</taxon>
        <taxon>Dipodascales incertae sedis</taxon>
        <taxon>Yarrowia</taxon>
    </lineage>
</organism>
<gene>
    <name type="primary">NOP14</name>
    <name type="ordered locus">YALI0F08371g</name>
</gene>
<keyword id="KW-0539">Nucleus</keyword>
<keyword id="KW-1185">Reference proteome</keyword>
<keyword id="KW-0690">Ribosome biogenesis</keyword>
<keyword id="KW-0698">rRNA processing</keyword>
<feature type="chain" id="PRO_0000137162" description="Probable nucleolar complex protein 14">
    <location>
        <begin position="1"/>
        <end position="832"/>
    </location>
</feature>
<feature type="region of interest" description="Disordered" evidence="2">
    <location>
        <begin position="1"/>
        <end position="43"/>
    </location>
</feature>
<feature type="region of interest" description="Disordered" evidence="2">
    <location>
        <begin position="301"/>
        <end position="334"/>
    </location>
</feature>
<feature type="region of interest" description="Disordered" evidence="2">
    <location>
        <begin position="362"/>
        <end position="422"/>
    </location>
</feature>
<feature type="region of interest" description="Disordered" evidence="2">
    <location>
        <begin position="807"/>
        <end position="832"/>
    </location>
</feature>
<feature type="compositionally biased region" description="Basic and acidic residues" evidence="2">
    <location>
        <begin position="9"/>
        <end position="18"/>
    </location>
</feature>
<feature type="compositionally biased region" description="Acidic residues" evidence="2">
    <location>
        <begin position="362"/>
        <end position="395"/>
    </location>
</feature>
<feature type="compositionally biased region" description="Low complexity" evidence="2">
    <location>
        <begin position="411"/>
        <end position="421"/>
    </location>
</feature>
<feature type="compositionally biased region" description="Basic and acidic residues" evidence="2">
    <location>
        <begin position="815"/>
        <end position="825"/>
    </location>
</feature>